<organism>
    <name type="scientific">Selaginella moellendorffii</name>
    <name type="common">Spikemoss</name>
    <dbReference type="NCBI Taxonomy" id="88036"/>
    <lineage>
        <taxon>Eukaryota</taxon>
        <taxon>Viridiplantae</taxon>
        <taxon>Streptophyta</taxon>
        <taxon>Embryophyta</taxon>
        <taxon>Tracheophyta</taxon>
        <taxon>Lycopodiopsida</taxon>
        <taxon>Selaginellales</taxon>
        <taxon>Selaginellaceae</taxon>
        <taxon>Selaginella</taxon>
    </lineage>
</organism>
<feature type="chain" id="PRO_0000417756" description="LIMR family protein SELMODRAFT_432208">
    <location>
        <begin position="1"/>
        <end position="410"/>
    </location>
</feature>
<feature type="transmembrane region" description="Helical" evidence="1">
    <location>
        <begin position="30"/>
        <end position="50"/>
    </location>
</feature>
<feature type="transmembrane region" description="Helical" evidence="1">
    <location>
        <begin position="67"/>
        <end position="87"/>
    </location>
</feature>
<feature type="transmembrane region" description="Helical" evidence="1">
    <location>
        <begin position="129"/>
        <end position="149"/>
    </location>
</feature>
<feature type="transmembrane region" description="Helical" evidence="1">
    <location>
        <begin position="156"/>
        <end position="176"/>
    </location>
</feature>
<feature type="transmembrane region" description="Helical" evidence="1">
    <location>
        <begin position="179"/>
        <end position="199"/>
    </location>
</feature>
<feature type="transmembrane region" description="Helical" evidence="1">
    <location>
        <begin position="288"/>
        <end position="308"/>
    </location>
</feature>
<feature type="transmembrane region" description="Helical" evidence="1">
    <location>
        <begin position="330"/>
        <end position="350"/>
    </location>
</feature>
<feature type="region of interest" description="Disordered" evidence="2">
    <location>
        <begin position="389"/>
        <end position="410"/>
    </location>
</feature>
<feature type="coiled-coil region" evidence="1">
    <location>
        <begin position="245"/>
        <end position="274"/>
    </location>
</feature>
<feature type="compositionally biased region" description="Low complexity" evidence="2">
    <location>
        <begin position="389"/>
        <end position="400"/>
    </location>
</feature>
<keyword id="KW-0175">Coiled coil</keyword>
<keyword id="KW-0472">Membrane</keyword>
<keyword id="KW-1185">Reference proteome</keyword>
<keyword id="KW-0812">Transmembrane</keyword>
<keyword id="KW-1133">Transmembrane helix</keyword>
<proteinExistence type="inferred from homology"/>
<gene>
    <name type="ORF">SELMODRAFT_432208</name>
</gene>
<sequence>MLPADVANRHSCEKNLYVGACKLTLPMKQLWWAVYIIDTVLVIPFAIFFYESDQEKTVTQRVKNALLWVVILLTVFCLLLGILYAVIGYADFTMRSLSSTTMAFINDFSSLNAKASCLVSAGFSLFSNVTLMVSLFFYIFPFFIDLTTLCDSVQLICLDLWLKLSVTYVITLNTIIGSILFMMFGGVGMATLPLSLIFAFKNRPKCVITRAQYVKEATDLAKRSNELKTATLGLQREERGGKKGRMFRKNVKKVQQELVFLEDDVEALNEAFPQGEKTLTVLFYLAKLVFGIVGLALSIIWLLHIIVFMLVNPPAFPFLNQVFIQLDTVGGLLGTTTFAIFCYYLVMSVISGKMHLGMRLLFLSIHPMKYQGTLDPMWHENVIASGAQPSSAMDSSSWSADRPCRPWPWP</sequence>
<protein>
    <recommendedName>
        <fullName>LIMR family protein SELMODRAFT_432208</fullName>
    </recommendedName>
</protein>
<evidence type="ECO:0000255" key="1"/>
<evidence type="ECO:0000256" key="2">
    <source>
        <dbReference type="SAM" id="MobiDB-lite"/>
    </source>
</evidence>
<evidence type="ECO:0000305" key="3"/>
<accession>D8TFA8</accession>
<dbReference type="EMBL" id="GL377772">
    <property type="protein sequence ID" value="EFJ04657.1"/>
    <property type="molecule type" value="Genomic_DNA"/>
</dbReference>
<dbReference type="RefSeq" id="XP_002994278.1">
    <property type="nucleotide sequence ID" value="XM_002994232.1"/>
</dbReference>
<dbReference type="SMR" id="D8TFA8"/>
<dbReference type="STRING" id="88036.D8TFA8"/>
<dbReference type="KEGG" id="smo:SELMODRAFT_432208"/>
<dbReference type="eggNOG" id="ENOG502QPKQ">
    <property type="taxonomic scope" value="Eukaryota"/>
</dbReference>
<dbReference type="HOGENOM" id="CLU_083163_0_0_1"/>
<dbReference type="InParanoid" id="D8TFA8"/>
<dbReference type="Proteomes" id="UP000001514">
    <property type="component" value="Unassembled WGS sequence"/>
</dbReference>
<dbReference type="GO" id="GO:0016020">
    <property type="term" value="C:membrane"/>
    <property type="evidence" value="ECO:0007669"/>
    <property type="project" value="UniProtKB-SubCell"/>
</dbReference>
<dbReference type="InterPro" id="IPR006876">
    <property type="entry name" value="LMBR1-like_membr_prot"/>
</dbReference>
<dbReference type="PANTHER" id="PTHR31652">
    <property type="entry name" value="LIMR FAMILY PROTEIN DDB_G0283707-RELATED"/>
    <property type="match status" value="1"/>
</dbReference>
<dbReference type="PANTHER" id="PTHR31652:SF0">
    <property type="entry name" value="LIMR FAMILY PROTEIN DDB_G0283707-RELATED"/>
    <property type="match status" value="1"/>
</dbReference>
<dbReference type="Pfam" id="PF04791">
    <property type="entry name" value="LMBR1"/>
    <property type="match status" value="2"/>
</dbReference>
<reference key="1">
    <citation type="journal article" date="2011" name="Science">
        <title>The Selaginella genome identifies genetic changes associated with the evolution of vascular plants.</title>
        <authorList>
            <person name="Banks J.A."/>
            <person name="Nishiyama T."/>
            <person name="Hasebe M."/>
            <person name="Bowman J.L."/>
            <person name="Gribskov M."/>
            <person name="dePamphilis C."/>
            <person name="Albert V.A."/>
            <person name="Aono N."/>
            <person name="Aoyama T."/>
            <person name="Ambrose B.A."/>
            <person name="Ashton N.W."/>
            <person name="Axtell M.J."/>
            <person name="Barker E."/>
            <person name="Barker M.S."/>
            <person name="Bennetzen J.L."/>
            <person name="Bonawitz N.D."/>
            <person name="Chapple C."/>
            <person name="Cheng C."/>
            <person name="Correa L.G."/>
            <person name="Dacre M."/>
            <person name="DeBarry J."/>
            <person name="Dreyer I."/>
            <person name="Elias M."/>
            <person name="Engstrom E.M."/>
            <person name="Estelle M."/>
            <person name="Feng L."/>
            <person name="Finet C."/>
            <person name="Floyd S.K."/>
            <person name="Frommer W.B."/>
            <person name="Fujita T."/>
            <person name="Gramzow L."/>
            <person name="Gutensohn M."/>
            <person name="Harholt J."/>
            <person name="Hattori M."/>
            <person name="Heyl A."/>
            <person name="Hirai T."/>
            <person name="Hiwatashi Y."/>
            <person name="Ishikawa M."/>
            <person name="Iwata M."/>
            <person name="Karol K.G."/>
            <person name="Koehler B."/>
            <person name="Kolukisaoglu U."/>
            <person name="Kubo M."/>
            <person name="Kurata T."/>
            <person name="Lalonde S."/>
            <person name="Li K."/>
            <person name="Li Y."/>
            <person name="Litt A."/>
            <person name="Lyons E."/>
            <person name="Manning G."/>
            <person name="Maruyama T."/>
            <person name="Michael T.P."/>
            <person name="Mikami K."/>
            <person name="Miyazaki S."/>
            <person name="Morinaga S."/>
            <person name="Murata T."/>
            <person name="Mueller-Roeber B."/>
            <person name="Nelson D.R."/>
            <person name="Obara M."/>
            <person name="Oguri Y."/>
            <person name="Olmstead R.G."/>
            <person name="Onodera N."/>
            <person name="Petersen B.L."/>
            <person name="Pils B."/>
            <person name="Prigge M."/>
            <person name="Rensing S.A."/>
            <person name="Riano-Pachon D.M."/>
            <person name="Roberts A.W."/>
            <person name="Sato Y."/>
            <person name="Scheller H.V."/>
            <person name="Schulz B."/>
            <person name="Schulz C."/>
            <person name="Shakirov E.V."/>
            <person name="Shibagaki N."/>
            <person name="Shinohara N."/>
            <person name="Shippen D.E."/>
            <person name="Soerensen I."/>
            <person name="Sotooka R."/>
            <person name="Sugimoto N."/>
            <person name="Sugita M."/>
            <person name="Sumikawa N."/>
            <person name="Tanurdzic M."/>
            <person name="Theissen G."/>
            <person name="Ulvskov P."/>
            <person name="Wakazuki S."/>
            <person name="Weng J.K."/>
            <person name="Willats W.W."/>
            <person name="Wipf D."/>
            <person name="Wolf P.G."/>
            <person name="Yang L."/>
            <person name="Zimmer A.D."/>
            <person name="Zhu Q."/>
            <person name="Mitros T."/>
            <person name="Hellsten U."/>
            <person name="Loque D."/>
            <person name="Otillar R."/>
            <person name="Salamov A."/>
            <person name="Schmutz J."/>
            <person name="Shapiro H."/>
            <person name="Lindquist E."/>
            <person name="Lucas S."/>
            <person name="Rokhsar D."/>
            <person name="Grigoriev I.V."/>
        </authorList>
    </citation>
    <scope>NUCLEOTIDE SEQUENCE [LARGE SCALE GENOMIC DNA]</scope>
</reference>
<comment type="subcellular location">
    <subcellularLocation>
        <location evidence="3">Membrane</location>
        <topology evidence="3">Multi-pass membrane protein</topology>
    </subcellularLocation>
</comment>
<comment type="similarity">
    <text evidence="3">Belongs to the LIMR family.</text>
</comment>
<name>LMBD3_SELML</name>